<sequence>MGRLHCTQDPVPEAVRGDMQQLNQLGAQQFSDLTEVLFHFLTEPKEVERFLAQLSEFATSNQISLGPLKSIMKSLLLVPNGALKKGLTAEQVRTDLQTLGLSEEKATYFSEKWKQNASTLAQWAMGQTLMVNQLIDMEWRFGVTSGSSELEKVGSIFLQLKLVVKKGKQTENLYMELTLPQFYSFLHEMERVRASMECLS</sequence>
<feature type="chain" id="PRO_0000077400" description="COMM domain-containing protein 7">
    <location>
        <begin position="1"/>
        <end position="200"/>
    </location>
</feature>
<feature type="domain" description="COMM" evidence="2">
    <location>
        <begin position="133"/>
        <end position="200"/>
    </location>
</feature>
<comment type="function">
    <text evidence="1">Scaffold protein in the commander complex that is essential for endosomal recycling of transmembrane cargos; the commander complex is composed of the CCC subcomplex and the retriever subcomplex (By similarity). May modulate activity of cullin-RING E3 ubiquitin ligase (CRL) complexes (By similarity). Associates with the NF-kappa-B complex and suppresses its transcriptional activity (By similarity).</text>
</comment>
<comment type="subunit">
    <text evidence="1">Component of the commander complex consisting of the CCC subcomplex and the retriever subcomplex (By similarity). Component of the CCC (COMMD/CCDC22/CCDC93) subcomplex consisting of COMMD1, COMMD2, COMMD3, COMMD4, COMMD5, COMMD6, COMMD7, COMMD8, COMMD9, COMMD10, CCDC22 and CCDC93; within the complex forms a heterodimer with COMMD9 (By similarity). Interacts with RELA (By similarity). Interacts with CCDC22, CCDC93, SCNN1B, CUL7 (By similarity).</text>
</comment>
<comment type="subcellular location">
    <subcellularLocation>
        <location evidence="1">Cytoplasmic vesicle</location>
    </subcellularLocation>
</comment>
<comment type="similarity">
    <text evidence="3">Belongs to the COMM domain-containing protein 7 family.</text>
</comment>
<comment type="sequence caution" evidence="3">
    <conflict type="erroneous initiation">
        <sequence resource="EMBL-CDS" id="AAH03310"/>
    </conflict>
</comment>
<evidence type="ECO:0000250" key="1">
    <source>
        <dbReference type="UniProtKB" id="Q86VX2"/>
    </source>
</evidence>
<evidence type="ECO:0000255" key="2">
    <source>
        <dbReference type="PROSITE-ProRule" id="PRU00602"/>
    </source>
</evidence>
<evidence type="ECO:0000305" key="3"/>
<accession>Q8BG94</accession>
<accession>Q99J75</accession>
<reference key="1">
    <citation type="journal article" date="2005" name="Science">
        <title>The transcriptional landscape of the mammalian genome.</title>
        <authorList>
            <person name="Carninci P."/>
            <person name="Kasukawa T."/>
            <person name="Katayama S."/>
            <person name="Gough J."/>
            <person name="Frith M.C."/>
            <person name="Maeda N."/>
            <person name="Oyama R."/>
            <person name="Ravasi T."/>
            <person name="Lenhard B."/>
            <person name="Wells C."/>
            <person name="Kodzius R."/>
            <person name="Shimokawa K."/>
            <person name="Bajic V.B."/>
            <person name="Brenner S.E."/>
            <person name="Batalov S."/>
            <person name="Forrest A.R."/>
            <person name="Zavolan M."/>
            <person name="Davis M.J."/>
            <person name="Wilming L.G."/>
            <person name="Aidinis V."/>
            <person name="Allen J.E."/>
            <person name="Ambesi-Impiombato A."/>
            <person name="Apweiler R."/>
            <person name="Aturaliya R.N."/>
            <person name="Bailey T.L."/>
            <person name="Bansal M."/>
            <person name="Baxter L."/>
            <person name="Beisel K.W."/>
            <person name="Bersano T."/>
            <person name="Bono H."/>
            <person name="Chalk A.M."/>
            <person name="Chiu K.P."/>
            <person name="Choudhary V."/>
            <person name="Christoffels A."/>
            <person name="Clutterbuck D.R."/>
            <person name="Crowe M.L."/>
            <person name="Dalla E."/>
            <person name="Dalrymple B.P."/>
            <person name="de Bono B."/>
            <person name="Della Gatta G."/>
            <person name="di Bernardo D."/>
            <person name="Down T."/>
            <person name="Engstrom P."/>
            <person name="Fagiolini M."/>
            <person name="Faulkner G."/>
            <person name="Fletcher C.F."/>
            <person name="Fukushima T."/>
            <person name="Furuno M."/>
            <person name="Futaki S."/>
            <person name="Gariboldi M."/>
            <person name="Georgii-Hemming P."/>
            <person name="Gingeras T.R."/>
            <person name="Gojobori T."/>
            <person name="Green R.E."/>
            <person name="Gustincich S."/>
            <person name="Harbers M."/>
            <person name="Hayashi Y."/>
            <person name="Hensch T.K."/>
            <person name="Hirokawa N."/>
            <person name="Hill D."/>
            <person name="Huminiecki L."/>
            <person name="Iacono M."/>
            <person name="Ikeo K."/>
            <person name="Iwama A."/>
            <person name="Ishikawa T."/>
            <person name="Jakt M."/>
            <person name="Kanapin A."/>
            <person name="Katoh M."/>
            <person name="Kawasawa Y."/>
            <person name="Kelso J."/>
            <person name="Kitamura H."/>
            <person name="Kitano H."/>
            <person name="Kollias G."/>
            <person name="Krishnan S.P."/>
            <person name="Kruger A."/>
            <person name="Kummerfeld S.K."/>
            <person name="Kurochkin I.V."/>
            <person name="Lareau L.F."/>
            <person name="Lazarevic D."/>
            <person name="Lipovich L."/>
            <person name="Liu J."/>
            <person name="Liuni S."/>
            <person name="McWilliam S."/>
            <person name="Madan Babu M."/>
            <person name="Madera M."/>
            <person name="Marchionni L."/>
            <person name="Matsuda H."/>
            <person name="Matsuzawa S."/>
            <person name="Miki H."/>
            <person name="Mignone F."/>
            <person name="Miyake S."/>
            <person name="Morris K."/>
            <person name="Mottagui-Tabar S."/>
            <person name="Mulder N."/>
            <person name="Nakano N."/>
            <person name="Nakauchi H."/>
            <person name="Ng P."/>
            <person name="Nilsson R."/>
            <person name="Nishiguchi S."/>
            <person name="Nishikawa S."/>
            <person name="Nori F."/>
            <person name="Ohara O."/>
            <person name="Okazaki Y."/>
            <person name="Orlando V."/>
            <person name="Pang K.C."/>
            <person name="Pavan W.J."/>
            <person name="Pavesi G."/>
            <person name="Pesole G."/>
            <person name="Petrovsky N."/>
            <person name="Piazza S."/>
            <person name="Reed J."/>
            <person name="Reid J.F."/>
            <person name="Ring B.Z."/>
            <person name="Ringwald M."/>
            <person name="Rost B."/>
            <person name="Ruan Y."/>
            <person name="Salzberg S.L."/>
            <person name="Sandelin A."/>
            <person name="Schneider C."/>
            <person name="Schoenbach C."/>
            <person name="Sekiguchi K."/>
            <person name="Semple C.A."/>
            <person name="Seno S."/>
            <person name="Sessa L."/>
            <person name="Sheng Y."/>
            <person name="Shibata Y."/>
            <person name="Shimada H."/>
            <person name="Shimada K."/>
            <person name="Silva D."/>
            <person name="Sinclair B."/>
            <person name="Sperling S."/>
            <person name="Stupka E."/>
            <person name="Sugiura K."/>
            <person name="Sultana R."/>
            <person name="Takenaka Y."/>
            <person name="Taki K."/>
            <person name="Tammoja K."/>
            <person name="Tan S.L."/>
            <person name="Tang S."/>
            <person name="Taylor M.S."/>
            <person name="Tegner J."/>
            <person name="Teichmann S.A."/>
            <person name="Ueda H.R."/>
            <person name="van Nimwegen E."/>
            <person name="Verardo R."/>
            <person name="Wei C.L."/>
            <person name="Yagi K."/>
            <person name="Yamanishi H."/>
            <person name="Zabarovsky E."/>
            <person name="Zhu S."/>
            <person name="Zimmer A."/>
            <person name="Hide W."/>
            <person name="Bult C."/>
            <person name="Grimmond S.M."/>
            <person name="Teasdale R.D."/>
            <person name="Liu E.T."/>
            <person name="Brusic V."/>
            <person name="Quackenbush J."/>
            <person name="Wahlestedt C."/>
            <person name="Mattick J.S."/>
            <person name="Hume D.A."/>
            <person name="Kai C."/>
            <person name="Sasaki D."/>
            <person name="Tomaru Y."/>
            <person name="Fukuda S."/>
            <person name="Kanamori-Katayama M."/>
            <person name="Suzuki M."/>
            <person name="Aoki J."/>
            <person name="Arakawa T."/>
            <person name="Iida J."/>
            <person name="Imamura K."/>
            <person name="Itoh M."/>
            <person name="Kato T."/>
            <person name="Kawaji H."/>
            <person name="Kawagashira N."/>
            <person name="Kawashima T."/>
            <person name="Kojima M."/>
            <person name="Kondo S."/>
            <person name="Konno H."/>
            <person name="Nakano K."/>
            <person name="Ninomiya N."/>
            <person name="Nishio T."/>
            <person name="Okada M."/>
            <person name="Plessy C."/>
            <person name="Shibata K."/>
            <person name="Shiraki T."/>
            <person name="Suzuki S."/>
            <person name="Tagami M."/>
            <person name="Waki K."/>
            <person name="Watahiki A."/>
            <person name="Okamura-Oho Y."/>
            <person name="Suzuki H."/>
            <person name="Kawai J."/>
            <person name="Hayashizaki Y."/>
        </authorList>
    </citation>
    <scope>NUCLEOTIDE SEQUENCE [LARGE SCALE MRNA]</scope>
    <source>
        <strain>C57BL/6J</strain>
        <tissue>Testis</tissue>
        <tissue>Tongue</tissue>
    </source>
</reference>
<reference key="2">
    <citation type="journal article" date="2004" name="Genome Res.">
        <title>The status, quality, and expansion of the NIH full-length cDNA project: the Mammalian Gene Collection (MGC).</title>
        <authorList>
            <consortium name="The MGC Project Team"/>
        </authorList>
    </citation>
    <scope>NUCLEOTIDE SEQUENCE [LARGE SCALE MRNA]</scope>
    <source>
        <strain>129</strain>
        <tissue>Mammary tumor</tissue>
    </source>
</reference>
<reference key="3">
    <citation type="journal article" date="2010" name="Cell">
        <title>A tissue-specific atlas of mouse protein phosphorylation and expression.</title>
        <authorList>
            <person name="Huttlin E.L."/>
            <person name="Jedrychowski M.P."/>
            <person name="Elias J.E."/>
            <person name="Goswami T."/>
            <person name="Rad R."/>
            <person name="Beausoleil S.A."/>
            <person name="Villen J."/>
            <person name="Haas W."/>
            <person name="Sowa M.E."/>
            <person name="Gygi S.P."/>
        </authorList>
    </citation>
    <scope>IDENTIFICATION BY MASS SPECTROMETRY [LARGE SCALE ANALYSIS]</scope>
    <source>
        <tissue>Brain</tissue>
        <tissue>Heart</tissue>
        <tissue>Kidney</tissue>
        <tissue>Liver</tissue>
        <tissue>Lung</tissue>
        <tissue>Pancreas</tissue>
        <tissue>Spleen</tissue>
        <tissue>Testis</tissue>
    </source>
</reference>
<organism>
    <name type="scientific">Mus musculus</name>
    <name type="common">Mouse</name>
    <dbReference type="NCBI Taxonomy" id="10090"/>
    <lineage>
        <taxon>Eukaryota</taxon>
        <taxon>Metazoa</taxon>
        <taxon>Chordata</taxon>
        <taxon>Craniata</taxon>
        <taxon>Vertebrata</taxon>
        <taxon>Euteleostomi</taxon>
        <taxon>Mammalia</taxon>
        <taxon>Eutheria</taxon>
        <taxon>Euarchontoglires</taxon>
        <taxon>Glires</taxon>
        <taxon>Rodentia</taxon>
        <taxon>Myomorpha</taxon>
        <taxon>Muroidea</taxon>
        <taxon>Muridae</taxon>
        <taxon>Murinae</taxon>
        <taxon>Mus</taxon>
        <taxon>Mus</taxon>
    </lineage>
</organism>
<name>COMD7_MOUSE</name>
<gene>
    <name type="primary">Commd7</name>
</gene>
<keyword id="KW-0968">Cytoplasmic vesicle</keyword>
<keyword id="KW-1185">Reference proteome</keyword>
<keyword id="KW-0804">Transcription</keyword>
<keyword id="KW-0805">Transcription regulation</keyword>
<keyword id="KW-0833">Ubl conjugation pathway</keyword>
<protein>
    <recommendedName>
        <fullName>COMM domain-containing protein 7</fullName>
    </recommendedName>
</protein>
<proteinExistence type="evidence at protein level"/>
<dbReference type="EMBL" id="AK009274">
    <property type="protein sequence ID" value="BAC25249.1"/>
    <property type="molecule type" value="mRNA"/>
</dbReference>
<dbReference type="EMBL" id="AK078774">
    <property type="protein sequence ID" value="BAC37387.1"/>
    <property type="molecule type" value="mRNA"/>
</dbReference>
<dbReference type="EMBL" id="BC003310">
    <property type="protein sequence ID" value="AAH03310.1"/>
    <property type="status" value="ALT_INIT"/>
    <property type="molecule type" value="mRNA"/>
</dbReference>
<dbReference type="CCDS" id="CCDS16912.2"/>
<dbReference type="RefSeq" id="NP_001182319.1">
    <property type="nucleotide sequence ID" value="NM_001195390.1"/>
</dbReference>
<dbReference type="RefSeq" id="NP_598611.2">
    <property type="nucleotide sequence ID" value="NM_133850.2"/>
</dbReference>
<dbReference type="SMR" id="Q8BG94"/>
<dbReference type="BioGRID" id="221226">
    <property type="interactions" value="5"/>
</dbReference>
<dbReference type="FunCoup" id="Q8BG94">
    <property type="interactions" value="808"/>
</dbReference>
<dbReference type="STRING" id="10090.ENSMUSP00000071752"/>
<dbReference type="PhosphoSitePlus" id="Q8BG94"/>
<dbReference type="PaxDb" id="10090-ENSMUSP00000071752"/>
<dbReference type="ProteomicsDB" id="283427"/>
<dbReference type="Pumba" id="Q8BG94"/>
<dbReference type="Antibodypedia" id="25401">
    <property type="antibodies" value="105 antibodies from 24 providers"/>
</dbReference>
<dbReference type="Ensembl" id="ENSMUST00000071852.10">
    <property type="protein sequence ID" value="ENSMUSP00000071752.4"/>
    <property type="gene ID" value="ENSMUSG00000056941.18"/>
</dbReference>
<dbReference type="GeneID" id="99311"/>
<dbReference type="KEGG" id="mmu:99311"/>
<dbReference type="UCSC" id="uc008nhx.2">
    <property type="organism name" value="mouse"/>
</dbReference>
<dbReference type="AGR" id="MGI:1914197"/>
<dbReference type="CTD" id="149951"/>
<dbReference type="MGI" id="MGI:1914197">
    <property type="gene designation" value="Commd7"/>
</dbReference>
<dbReference type="VEuPathDB" id="HostDB:ENSMUSG00000056941"/>
<dbReference type="eggNOG" id="ENOG502QQ17">
    <property type="taxonomic scope" value="Eukaryota"/>
</dbReference>
<dbReference type="GeneTree" id="ENSGT00390000012419"/>
<dbReference type="HOGENOM" id="CLU_118172_0_0_1"/>
<dbReference type="InParanoid" id="Q8BG94"/>
<dbReference type="OMA" id="SQQWGEH"/>
<dbReference type="OrthoDB" id="76101at2759"/>
<dbReference type="PhylomeDB" id="Q8BG94"/>
<dbReference type="Reactome" id="R-MMU-8951664">
    <property type="pathway name" value="Neddylation"/>
</dbReference>
<dbReference type="BioGRID-ORCS" id="99311">
    <property type="hits" value="2 hits in 76 CRISPR screens"/>
</dbReference>
<dbReference type="ChiTaRS" id="Commd7">
    <property type="organism name" value="mouse"/>
</dbReference>
<dbReference type="PRO" id="PR:Q8BG94"/>
<dbReference type="Proteomes" id="UP000000589">
    <property type="component" value="Chromosome 2"/>
</dbReference>
<dbReference type="RNAct" id="Q8BG94">
    <property type="molecule type" value="protein"/>
</dbReference>
<dbReference type="Bgee" id="ENSMUSG00000056941">
    <property type="expression patterns" value="Expressed in cortical plate and 260 other cell types or tissues"/>
</dbReference>
<dbReference type="ExpressionAtlas" id="Q8BG94">
    <property type="expression patterns" value="baseline and differential"/>
</dbReference>
<dbReference type="GO" id="GO:0031410">
    <property type="term" value="C:cytoplasmic vesicle"/>
    <property type="evidence" value="ECO:0007669"/>
    <property type="project" value="UniProtKB-KW"/>
</dbReference>
<dbReference type="GO" id="GO:0051059">
    <property type="term" value="F:NF-kappaB binding"/>
    <property type="evidence" value="ECO:0007669"/>
    <property type="project" value="Ensembl"/>
</dbReference>
<dbReference type="GO" id="GO:0045892">
    <property type="term" value="P:negative regulation of DNA-templated transcription"/>
    <property type="evidence" value="ECO:0007669"/>
    <property type="project" value="Ensembl"/>
</dbReference>
<dbReference type="GO" id="GO:0033209">
    <property type="term" value="P:tumor necrosis factor-mediated signaling pathway"/>
    <property type="evidence" value="ECO:0007669"/>
    <property type="project" value="Ensembl"/>
</dbReference>
<dbReference type="CDD" id="cd04755">
    <property type="entry name" value="Commd7"/>
    <property type="match status" value="1"/>
</dbReference>
<dbReference type="InterPro" id="IPR017920">
    <property type="entry name" value="COMM"/>
</dbReference>
<dbReference type="InterPro" id="IPR047155">
    <property type="entry name" value="COMMD4/6/7/8"/>
</dbReference>
<dbReference type="InterPro" id="IPR037358">
    <property type="entry name" value="COMMD7"/>
</dbReference>
<dbReference type="PANTHER" id="PTHR16231">
    <property type="entry name" value="COMM DOMAIN-CONTAINING PROTEIN 4-8 FAMILY MEMBER"/>
    <property type="match status" value="1"/>
</dbReference>
<dbReference type="PANTHER" id="PTHR16231:SF2">
    <property type="entry name" value="COMM DOMAIN-CONTAINING PROTEIN 7"/>
    <property type="match status" value="1"/>
</dbReference>
<dbReference type="Pfam" id="PF07258">
    <property type="entry name" value="COMM_domain"/>
    <property type="match status" value="1"/>
</dbReference>
<dbReference type="Pfam" id="PF21672">
    <property type="entry name" value="COMM_HN"/>
    <property type="match status" value="1"/>
</dbReference>
<dbReference type="PROSITE" id="PS51269">
    <property type="entry name" value="COMM"/>
    <property type="match status" value="1"/>
</dbReference>